<feature type="chain" id="PRO_1000117130" description="Acetylglutamate kinase">
    <location>
        <begin position="1"/>
        <end position="312"/>
    </location>
</feature>
<feature type="binding site" evidence="1">
    <location>
        <begin position="69"/>
        <end position="70"/>
    </location>
    <ligand>
        <name>substrate</name>
    </ligand>
</feature>
<feature type="binding site" evidence="1">
    <location>
        <position position="91"/>
    </location>
    <ligand>
        <name>substrate</name>
    </ligand>
</feature>
<feature type="binding site" evidence="1">
    <location>
        <position position="191"/>
    </location>
    <ligand>
        <name>substrate</name>
    </ligand>
</feature>
<feature type="site" description="Transition state stabilizer" evidence="1">
    <location>
        <position position="34"/>
    </location>
</feature>
<feature type="site" description="Transition state stabilizer" evidence="1">
    <location>
        <position position="252"/>
    </location>
</feature>
<name>ARGB_STRGG</name>
<comment type="function">
    <text evidence="1">Catalyzes the ATP-dependent phosphorylation of N-acetyl-L-glutamate.</text>
</comment>
<comment type="catalytic activity">
    <reaction evidence="1">
        <text>N-acetyl-L-glutamate + ATP = N-acetyl-L-glutamyl 5-phosphate + ADP</text>
        <dbReference type="Rhea" id="RHEA:14629"/>
        <dbReference type="ChEBI" id="CHEBI:30616"/>
        <dbReference type="ChEBI" id="CHEBI:44337"/>
        <dbReference type="ChEBI" id="CHEBI:57936"/>
        <dbReference type="ChEBI" id="CHEBI:456216"/>
        <dbReference type="EC" id="2.7.2.8"/>
    </reaction>
</comment>
<comment type="pathway">
    <text evidence="1">Amino-acid biosynthesis; L-arginine biosynthesis; N(2)-acetyl-L-ornithine from L-glutamate: step 2/4.</text>
</comment>
<comment type="subcellular location">
    <subcellularLocation>
        <location evidence="1">Cytoplasm</location>
    </subcellularLocation>
</comment>
<comment type="similarity">
    <text evidence="1">Belongs to the acetylglutamate kinase family. ArgB subfamily.</text>
</comment>
<evidence type="ECO:0000255" key="1">
    <source>
        <dbReference type="HAMAP-Rule" id="MF_00082"/>
    </source>
</evidence>
<organism>
    <name type="scientific">Streptomyces griseus subsp. griseus (strain JCM 4626 / CBS 651.72 / NBRC 13350 / KCC S-0626 / ISP 5235)</name>
    <dbReference type="NCBI Taxonomy" id="455632"/>
    <lineage>
        <taxon>Bacteria</taxon>
        <taxon>Bacillati</taxon>
        <taxon>Actinomycetota</taxon>
        <taxon>Actinomycetes</taxon>
        <taxon>Kitasatosporales</taxon>
        <taxon>Streptomycetaceae</taxon>
        <taxon>Streptomyces</taxon>
    </lineage>
</organism>
<protein>
    <recommendedName>
        <fullName evidence="1">Acetylglutamate kinase</fullName>
        <ecNumber evidence="1">2.7.2.8</ecNumber>
    </recommendedName>
    <alternativeName>
        <fullName evidence="1">N-acetyl-L-glutamate 5-phosphotransferase</fullName>
    </alternativeName>
    <alternativeName>
        <fullName evidence="1">NAG kinase</fullName>
        <shortName evidence="1">NAGK</shortName>
    </alternativeName>
</protein>
<accession>B1W3A9</accession>
<gene>
    <name evidence="1" type="primary">argB</name>
    <name type="ordered locus">SGR_5962</name>
</gene>
<proteinExistence type="inferred from homology"/>
<reference key="1">
    <citation type="journal article" date="2008" name="J. Bacteriol.">
        <title>Genome sequence of the streptomycin-producing microorganism Streptomyces griseus IFO 13350.</title>
        <authorList>
            <person name="Ohnishi Y."/>
            <person name="Ishikawa J."/>
            <person name="Hara H."/>
            <person name="Suzuki H."/>
            <person name="Ikenoya M."/>
            <person name="Ikeda H."/>
            <person name="Yamashita A."/>
            <person name="Hattori M."/>
            <person name="Horinouchi S."/>
        </authorList>
    </citation>
    <scope>NUCLEOTIDE SEQUENCE [LARGE SCALE GENOMIC DNA]</scope>
    <source>
        <strain>JCM 4626 / CBS 651.72 / NBRC 13350 / KCC S-0626 / ISP 5235</strain>
    </source>
</reference>
<sequence length="312" mass="33212">MSTARKHTALPKAQILIEALPWLTRHHGRTVVIKFGGNAMIDEELKAAFAQDVVFLRHAGLKPVVVHGGGPQISAQLDKQGLVSEFKAGLRVTTPEAMDVVRMVLAGQVQRELVGLLNQHGPLAVGLTGEDAHTITAVQHRPTIDGELVDIGRVGEITAIDTGAIQALLDDGRIPVVSSIARSADDHHVYNVNADTAAAALAAALNAETLMVLTDVEGLYEDWPNSDDVISRLTASQLEKLLPELSSGMVPKMQGCLHAVRNGVETARVIDGRVQHSILLEIFTDEGIGTMVVPDAPIDVHAARTAHEQGAS</sequence>
<dbReference type="EC" id="2.7.2.8" evidence="1"/>
<dbReference type="EMBL" id="AP009493">
    <property type="protein sequence ID" value="BAG22791.1"/>
    <property type="molecule type" value="Genomic_DNA"/>
</dbReference>
<dbReference type="RefSeq" id="WP_003970269.1">
    <property type="nucleotide sequence ID" value="NC_010572.1"/>
</dbReference>
<dbReference type="SMR" id="B1W3A9"/>
<dbReference type="KEGG" id="sgr:SGR_5962"/>
<dbReference type="eggNOG" id="COG0548">
    <property type="taxonomic scope" value="Bacteria"/>
</dbReference>
<dbReference type="HOGENOM" id="CLU_053680_0_1_11"/>
<dbReference type="UniPathway" id="UPA00068">
    <property type="reaction ID" value="UER00107"/>
</dbReference>
<dbReference type="Proteomes" id="UP000001685">
    <property type="component" value="Chromosome"/>
</dbReference>
<dbReference type="GO" id="GO:0005737">
    <property type="term" value="C:cytoplasm"/>
    <property type="evidence" value="ECO:0007669"/>
    <property type="project" value="UniProtKB-SubCell"/>
</dbReference>
<dbReference type="GO" id="GO:0003991">
    <property type="term" value="F:acetylglutamate kinase activity"/>
    <property type="evidence" value="ECO:0007669"/>
    <property type="project" value="UniProtKB-UniRule"/>
</dbReference>
<dbReference type="GO" id="GO:0005524">
    <property type="term" value="F:ATP binding"/>
    <property type="evidence" value="ECO:0007669"/>
    <property type="project" value="UniProtKB-UniRule"/>
</dbReference>
<dbReference type="GO" id="GO:0042450">
    <property type="term" value="P:arginine biosynthetic process via ornithine"/>
    <property type="evidence" value="ECO:0007669"/>
    <property type="project" value="UniProtKB-UniRule"/>
</dbReference>
<dbReference type="GO" id="GO:0006526">
    <property type="term" value="P:L-arginine biosynthetic process"/>
    <property type="evidence" value="ECO:0007669"/>
    <property type="project" value="UniProtKB-UniPathway"/>
</dbReference>
<dbReference type="CDD" id="cd04250">
    <property type="entry name" value="AAK_NAGK-C"/>
    <property type="match status" value="1"/>
</dbReference>
<dbReference type="FunFam" id="3.40.1160.10:FF:000015">
    <property type="entry name" value="Acetylglutamate kinase"/>
    <property type="match status" value="1"/>
</dbReference>
<dbReference type="Gene3D" id="3.40.1160.10">
    <property type="entry name" value="Acetylglutamate kinase-like"/>
    <property type="match status" value="1"/>
</dbReference>
<dbReference type="HAMAP" id="MF_00082">
    <property type="entry name" value="ArgB"/>
    <property type="match status" value="1"/>
</dbReference>
<dbReference type="InterPro" id="IPR036393">
    <property type="entry name" value="AceGlu_kinase-like_sf"/>
</dbReference>
<dbReference type="InterPro" id="IPR004662">
    <property type="entry name" value="AcgluKinase_fam"/>
</dbReference>
<dbReference type="InterPro" id="IPR037528">
    <property type="entry name" value="ArgB"/>
</dbReference>
<dbReference type="InterPro" id="IPR001048">
    <property type="entry name" value="Asp/Glu/Uridylate_kinase"/>
</dbReference>
<dbReference type="InterPro" id="IPR001057">
    <property type="entry name" value="Glu/AcGlu_kinase"/>
</dbReference>
<dbReference type="InterPro" id="IPR041727">
    <property type="entry name" value="NAGK-C"/>
</dbReference>
<dbReference type="NCBIfam" id="TIGR00761">
    <property type="entry name" value="argB"/>
    <property type="match status" value="1"/>
</dbReference>
<dbReference type="PANTHER" id="PTHR23342">
    <property type="entry name" value="N-ACETYLGLUTAMATE SYNTHASE"/>
    <property type="match status" value="1"/>
</dbReference>
<dbReference type="PANTHER" id="PTHR23342:SF0">
    <property type="entry name" value="N-ACETYLGLUTAMATE SYNTHASE, MITOCHONDRIAL"/>
    <property type="match status" value="1"/>
</dbReference>
<dbReference type="Pfam" id="PF00696">
    <property type="entry name" value="AA_kinase"/>
    <property type="match status" value="1"/>
</dbReference>
<dbReference type="PIRSF" id="PIRSF000728">
    <property type="entry name" value="NAGK"/>
    <property type="match status" value="1"/>
</dbReference>
<dbReference type="PRINTS" id="PR00474">
    <property type="entry name" value="GLU5KINASE"/>
</dbReference>
<dbReference type="SUPFAM" id="SSF53633">
    <property type="entry name" value="Carbamate kinase-like"/>
    <property type="match status" value="1"/>
</dbReference>
<keyword id="KW-0028">Amino-acid biosynthesis</keyword>
<keyword id="KW-0055">Arginine biosynthesis</keyword>
<keyword id="KW-0067">ATP-binding</keyword>
<keyword id="KW-0963">Cytoplasm</keyword>
<keyword id="KW-0418">Kinase</keyword>
<keyword id="KW-0547">Nucleotide-binding</keyword>
<keyword id="KW-0808">Transferase</keyword>